<reference key="1">
    <citation type="journal article" date="2005" name="Proc. Natl. Acad. Sci. U.S.A.">
        <title>The genome of Salinibacter ruber: convergence and gene exchange among hyperhalophilic bacteria and archaea.</title>
        <authorList>
            <person name="Mongodin E.F."/>
            <person name="Nelson K.E."/>
            <person name="Daugherty S."/>
            <person name="DeBoy R.T."/>
            <person name="Wister J."/>
            <person name="Khouri H."/>
            <person name="Weidman J."/>
            <person name="Walsh D.A."/>
            <person name="Papke R.T."/>
            <person name="Sanchez Perez G."/>
            <person name="Sharma A.K."/>
            <person name="Nesbo C.L."/>
            <person name="MacLeod D."/>
            <person name="Bapteste E."/>
            <person name="Doolittle W.F."/>
            <person name="Charlebois R.L."/>
            <person name="Legault B."/>
            <person name="Rodriguez-Valera F."/>
        </authorList>
    </citation>
    <scope>NUCLEOTIDE SEQUENCE [LARGE SCALE GENOMIC DNA]</scope>
    <source>
        <strain>DSM 13855 / CECT 5946 / M31</strain>
    </source>
</reference>
<keyword id="KW-0067">ATP-binding</keyword>
<keyword id="KW-0997">Cell inner membrane</keyword>
<keyword id="KW-1003">Cell membrane</keyword>
<keyword id="KW-0472">Membrane</keyword>
<keyword id="KW-0547">Nucleotide-binding</keyword>
<keyword id="KW-0592">Phosphate transport</keyword>
<keyword id="KW-1185">Reference proteome</keyword>
<keyword id="KW-1278">Translocase</keyword>
<keyword id="KW-0813">Transport</keyword>
<feature type="chain" id="PRO_0000272520" description="Phosphate import ATP-binding protein PstB">
    <location>
        <begin position="1"/>
        <end position="249"/>
    </location>
</feature>
<feature type="domain" description="ABC transporter" evidence="1">
    <location>
        <begin position="5"/>
        <end position="244"/>
    </location>
</feature>
<feature type="binding site" evidence="1">
    <location>
        <begin position="37"/>
        <end position="44"/>
    </location>
    <ligand>
        <name>ATP</name>
        <dbReference type="ChEBI" id="CHEBI:30616"/>
    </ligand>
</feature>
<proteinExistence type="inferred from homology"/>
<accession>Q2S081</accession>
<dbReference type="EC" id="7.3.2.1" evidence="1"/>
<dbReference type="EMBL" id="CP000159">
    <property type="protein sequence ID" value="ABC46270.1"/>
    <property type="molecule type" value="Genomic_DNA"/>
</dbReference>
<dbReference type="RefSeq" id="YP_446400.1">
    <property type="nucleotide sequence ID" value="NC_007677.1"/>
</dbReference>
<dbReference type="SMR" id="Q2S081"/>
<dbReference type="STRING" id="309807.SRU_2296"/>
<dbReference type="EnsemblBacteria" id="ABC46270">
    <property type="protein sequence ID" value="ABC46270"/>
    <property type="gene ID" value="SRU_2296"/>
</dbReference>
<dbReference type="KEGG" id="sru:SRU_2296"/>
<dbReference type="PATRIC" id="fig|309807.25.peg.2392"/>
<dbReference type="eggNOG" id="COG1117">
    <property type="taxonomic scope" value="Bacteria"/>
</dbReference>
<dbReference type="HOGENOM" id="CLU_000604_1_22_10"/>
<dbReference type="OrthoDB" id="9782239at2"/>
<dbReference type="Proteomes" id="UP000008674">
    <property type="component" value="Chromosome"/>
</dbReference>
<dbReference type="GO" id="GO:0005886">
    <property type="term" value="C:plasma membrane"/>
    <property type="evidence" value="ECO:0007669"/>
    <property type="project" value="UniProtKB-SubCell"/>
</dbReference>
<dbReference type="GO" id="GO:0005524">
    <property type="term" value="F:ATP binding"/>
    <property type="evidence" value="ECO:0007669"/>
    <property type="project" value="UniProtKB-KW"/>
</dbReference>
<dbReference type="GO" id="GO:0016887">
    <property type="term" value="F:ATP hydrolysis activity"/>
    <property type="evidence" value="ECO:0007669"/>
    <property type="project" value="InterPro"/>
</dbReference>
<dbReference type="GO" id="GO:0015415">
    <property type="term" value="F:ATPase-coupled phosphate ion transmembrane transporter activity"/>
    <property type="evidence" value="ECO:0007669"/>
    <property type="project" value="UniProtKB-EC"/>
</dbReference>
<dbReference type="GO" id="GO:0035435">
    <property type="term" value="P:phosphate ion transmembrane transport"/>
    <property type="evidence" value="ECO:0007669"/>
    <property type="project" value="InterPro"/>
</dbReference>
<dbReference type="CDD" id="cd03260">
    <property type="entry name" value="ABC_PstB_phosphate_transporter"/>
    <property type="match status" value="1"/>
</dbReference>
<dbReference type="Gene3D" id="3.40.50.300">
    <property type="entry name" value="P-loop containing nucleotide triphosphate hydrolases"/>
    <property type="match status" value="1"/>
</dbReference>
<dbReference type="InterPro" id="IPR003593">
    <property type="entry name" value="AAA+_ATPase"/>
</dbReference>
<dbReference type="InterPro" id="IPR003439">
    <property type="entry name" value="ABC_transporter-like_ATP-bd"/>
</dbReference>
<dbReference type="InterPro" id="IPR017871">
    <property type="entry name" value="ABC_transporter-like_CS"/>
</dbReference>
<dbReference type="InterPro" id="IPR027417">
    <property type="entry name" value="P-loop_NTPase"/>
</dbReference>
<dbReference type="InterPro" id="IPR005670">
    <property type="entry name" value="PstB-like"/>
</dbReference>
<dbReference type="NCBIfam" id="TIGR00972">
    <property type="entry name" value="3a0107s01c2"/>
    <property type="match status" value="1"/>
</dbReference>
<dbReference type="PANTHER" id="PTHR43423">
    <property type="entry name" value="ABC TRANSPORTER I FAMILY MEMBER 17"/>
    <property type="match status" value="1"/>
</dbReference>
<dbReference type="PANTHER" id="PTHR43423:SF1">
    <property type="entry name" value="ABC TRANSPORTER I FAMILY MEMBER 17"/>
    <property type="match status" value="1"/>
</dbReference>
<dbReference type="Pfam" id="PF00005">
    <property type="entry name" value="ABC_tran"/>
    <property type="match status" value="1"/>
</dbReference>
<dbReference type="SMART" id="SM00382">
    <property type="entry name" value="AAA"/>
    <property type="match status" value="1"/>
</dbReference>
<dbReference type="SUPFAM" id="SSF52540">
    <property type="entry name" value="P-loop containing nucleoside triphosphate hydrolases"/>
    <property type="match status" value="1"/>
</dbReference>
<dbReference type="PROSITE" id="PS00211">
    <property type="entry name" value="ABC_TRANSPORTER_1"/>
    <property type="match status" value="1"/>
</dbReference>
<dbReference type="PROSITE" id="PS50893">
    <property type="entry name" value="ABC_TRANSPORTER_2"/>
    <property type="match status" value="1"/>
</dbReference>
<dbReference type="PROSITE" id="PS51238">
    <property type="entry name" value="PSTB"/>
    <property type="match status" value="1"/>
</dbReference>
<sequence length="249" mass="27915">MRPKLRIEDLHFWYGENHALQGISMDVQPNRVTALIGPSGCGKSTLLRCLNRMNELIQGTTLEGTILADGQDIYADDTDPVMVRRRIGMVFQKPNPFPKSIYKNVAWGAEINGYTGDLDALVERSLRQAALWDEVKDQLHSSALDLSGGQQQRLCIARTLAVQPDVVLMDEPASALDPIATSKIEETITELKKDYTIVIVTHNMQQASRISDETAFLYMGRLIEMSPTDQLFTRPEKDRTEAYVTGRFG</sequence>
<name>PSTB_SALRD</name>
<gene>
    <name evidence="1" type="primary">pstB</name>
    <name type="ordered locus">SRU_2296</name>
</gene>
<evidence type="ECO:0000255" key="1">
    <source>
        <dbReference type="HAMAP-Rule" id="MF_01702"/>
    </source>
</evidence>
<organism>
    <name type="scientific">Salinibacter ruber (strain DSM 13855 / M31)</name>
    <dbReference type="NCBI Taxonomy" id="309807"/>
    <lineage>
        <taxon>Bacteria</taxon>
        <taxon>Pseudomonadati</taxon>
        <taxon>Rhodothermota</taxon>
        <taxon>Rhodothermia</taxon>
        <taxon>Rhodothermales</taxon>
        <taxon>Salinibacteraceae</taxon>
        <taxon>Salinibacter</taxon>
    </lineage>
</organism>
<protein>
    <recommendedName>
        <fullName evidence="1">Phosphate import ATP-binding protein PstB</fullName>
        <ecNumber evidence="1">7.3.2.1</ecNumber>
    </recommendedName>
    <alternativeName>
        <fullName evidence="1">ABC phosphate transporter</fullName>
    </alternativeName>
    <alternativeName>
        <fullName evidence="1">Phosphate-transporting ATPase</fullName>
    </alternativeName>
</protein>
<comment type="function">
    <text evidence="1">Part of the ABC transporter complex PstSACB involved in phosphate import. Responsible for energy coupling to the transport system.</text>
</comment>
<comment type="catalytic activity">
    <reaction evidence="1">
        <text>phosphate(out) + ATP + H2O = ADP + 2 phosphate(in) + H(+)</text>
        <dbReference type="Rhea" id="RHEA:24440"/>
        <dbReference type="ChEBI" id="CHEBI:15377"/>
        <dbReference type="ChEBI" id="CHEBI:15378"/>
        <dbReference type="ChEBI" id="CHEBI:30616"/>
        <dbReference type="ChEBI" id="CHEBI:43474"/>
        <dbReference type="ChEBI" id="CHEBI:456216"/>
        <dbReference type="EC" id="7.3.2.1"/>
    </reaction>
</comment>
<comment type="subunit">
    <text evidence="1">The complex is composed of two ATP-binding proteins (PstB), two transmembrane proteins (PstC and PstA) and a solute-binding protein (PstS).</text>
</comment>
<comment type="subcellular location">
    <subcellularLocation>
        <location evidence="1">Cell inner membrane</location>
        <topology evidence="1">Peripheral membrane protein</topology>
    </subcellularLocation>
</comment>
<comment type="similarity">
    <text evidence="1">Belongs to the ABC transporter superfamily. Phosphate importer (TC 3.A.1.7) family.</text>
</comment>